<evidence type="ECO:0000250" key="1">
    <source>
        <dbReference type="UniProtKB" id="Q3USJ8"/>
    </source>
</evidence>
<evidence type="ECO:0000255" key="2"/>
<evidence type="ECO:0000255" key="3">
    <source>
        <dbReference type="PROSITE-ProRule" id="PRU00192"/>
    </source>
</evidence>
<evidence type="ECO:0000255" key="4">
    <source>
        <dbReference type="PROSITE-ProRule" id="PRU01077"/>
    </source>
</evidence>
<evidence type="ECO:0000256" key="5">
    <source>
        <dbReference type="SAM" id="MobiDB-lite"/>
    </source>
</evidence>
<evidence type="ECO:0000269" key="6">
    <source>
    </source>
</evidence>
<evidence type="ECO:0000269" key="7">
    <source>
    </source>
</evidence>
<evidence type="ECO:0000269" key="8">
    <source>
    </source>
</evidence>
<evidence type="ECO:0000303" key="9">
    <source>
    </source>
</evidence>
<evidence type="ECO:0000303" key="10">
    <source>
    </source>
</evidence>
<evidence type="ECO:0000303" key="11">
    <source>
    </source>
</evidence>
<evidence type="ECO:0000305" key="12"/>
<evidence type="ECO:0007744" key="13">
    <source>
        <dbReference type="PDB" id="6GBU"/>
    </source>
</evidence>
<evidence type="ECO:0007744" key="14">
    <source>
    </source>
</evidence>
<evidence type="ECO:0007829" key="15">
    <source>
        <dbReference type="PDB" id="2DL5"/>
    </source>
</evidence>
<evidence type="ECO:0007829" key="16">
    <source>
        <dbReference type="PDB" id="6GBU"/>
    </source>
</evidence>
<protein>
    <recommendedName>
        <fullName>F-BAR and double SH3 domains protein 2</fullName>
    </recommendedName>
    <alternativeName>
        <fullName evidence="9">Carom</fullName>
    </alternativeName>
    <alternativeName>
        <fullName evidence="1">Protein nervous wreck 1</fullName>
        <shortName evidence="1">NWK1</shortName>
    </alternativeName>
    <alternativeName>
        <fullName>SH3 multiple domains protein 3</fullName>
    </alternativeName>
</protein>
<feature type="chain" id="PRO_0000278214" description="F-BAR and double SH3 domains protein 2">
    <location>
        <begin position="1"/>
        <end position="740"/>
    </location>
</feature>
<feature type="domain" description="F-BAR" evidence="4">
    <location>
        <begin position="8"/>
        <end position="282"/>
    </location>
</feature>
<feature type="domain" description="SH3 1" evidence="3">
    <location>
        <begin position="469"/>
        <end position="530"/>
    </location>
</feature>
<feature type="domain" description="SH3 2" evidence="3">
    <location>
        <begin position="567"/>
        <end position="629"/>
    </location>
</feature>
<feature type="region of interest" description="Disordered" evidence="5">
    <location>
        <begin position="303"/>
        <end position="323"/>
    </location>
</feature>
<feature type="region of interest" description="Required and sufficient for location at clathrin-coated pits" evidence="7">
    <location>
        <begin position="567"/>
        <end position="629"/>
    </location>
</feature>
<feature type="region of interest" description="Disordered" evidence="5">
    <location>
        <begin position="633"/>
        <end position="740"/>
    </location>
</feature>
<feature type="coiled-coil region" evidence="2">
    <location>
        <begin position="356"/>
        <end position="397"/>
    </location>
</feature>
<feature type="compositionally biased region" description="Basic and acidic residues" evidence="5">
    <location>
        <begin position="307"/>
        <end position="323"/>
    </location>
</feature>
<feature type="compositionally biased region" description="Pro residues" evidence="5">
    <location>
        <begin position="646"/>
        <end position="657"/>
    </location>
</feature>
<feature type="modified residue" description="Phosphoserine" evidence="14">
    <location>
        <position position="675"/>
    </location>
</feature>
<feature type="modified residue" description="Phosphoserine" evidence="8 14">
    <location>
        <position position="681"/>
    </location>
</feature>
<feature type="splice variant" id="VSP_023167" description="In isoform 2 and isoform 3." evidence="9 10 11">
    <location>
        <begin position="1"/>
        <end position="56"/>
    </location>
</feature>
<feature type="splice variant" id="VSP_023168" description="In isoform 3." evidence="10">
    <original>VCF</original>
    <variation>GKD</variation>
    <location>
        <begin position="569"/>
        <end position="571"/>
    </location>
</feature>
<feature type="splice variant" id="VSP_023169" description="In isoform 3." evidence="10">
    <location>
        <begin position="572"/>
        <end position="740"/>
    </location>
</feature>
<feature type="mutagenesis site" description="Loss of ability to promote actin polymerization; when associated with A-480." evidence="7">
    <original>Y</original>
    <variation>A</variation>
    <location>
        <position position="478"/>
    </location>
</feature>
<feature type="mutagenesis site" description="Loss of ability to promote actin polymerization; when associated with A-478." evidence="7">
    <original>Y</original>
    <variation>A</variation>
    <location>
        <position position="480"/>
    </location>
</feature>
<feature type="mutagenesis site" description="Loss of ability to promote actin polymerization; when associated with A-524." evidence="7">
    <original>P</original>
    <variation>A</variation>
    <location>
        <position position="521"/>
    </location>
</feature>
<feature type="mutagenesis site" description="Loss of ability to promote actin polymerization; when associated with A-521." evidence="7">
    <original>Y</original>
    <variation>A</variation>
    <location>
        <position position="524"/>
    </location>
</feature>
<feature type="mutagenesis site" description="Abolishes interaction with ITSN1 and location at clathrin-coated pits; when associated with S-607." evidence="7">
    <original>Y</original>
    <variation>S</variation>
    <location>
        <position position="576"/>
    </location>
</feature>
<feature type="mutagenesis site" description="Abolishes interaction with ITSN1 and location at clathrin-coated pits; when associated with S-576." evidence="7">
    <original>F</original>
    <variation>S</variation>
    <location>
        <position position="607"/>
    </location>
</feature>
<feature type="mutagenesis site" description="Abolishes interaction with ITSN1." evidence="7">
    <original>VL</original>
    <variation>KK</variation>
    <location>
        <begin position="622"/>
        <end position="623"/>
    </location>
</feature>
<feature type="mutagenesis site" description="Impaired recruitment to the cell membrane." evidence="8">
    <original>S</original>
    <variation>A</variation>
    <location>
        <position position="681"/>
    </location>
</feature>
<feature type="mutagenesis site" description="Increased recruitment to the cell membrane." evidence="8">
    <original>S</original>
    <variation>E</variation>
    <location>
        <position position="681"/>
    </location>
</feature>
<feature type="strand" evidence="15">
    <location>
        <begin position="470"/>
        <end position="476"/>
    </location>
</feature>
<feature type="strand" evidence="15">
    <location>
        <begin position="492"/>
        <end position="500"/>
    </location>
</feature>
<feature type="strand" evidence="15">
    <location>
        <begin position="503"/>
        <end position="511"/>
    </location>
</feature>
<feature type="strand" evidence="15">
    <location>
        <begin position="517"/>
        <end position="521"/>
    </location>
</feature>
<feature type="turn" evidence="15">
    <location>
        <begin position="522"/>
        <end position="524"/>
    </location>
</feature>
<feature type="strand" evidence="16">
    <location>
        <begin position="571"/>
        <end position="576"/>
    </location>
</feature>
<feature type="strand" evidence="16">
    <location>
        <begin position="581"/>
        <end position="585"/>
    </location>
</feature>
<feature type="strand" evidence="16">
    <location>
        <begin position="593"/>
        <end position="598"/>
    </location>
</feature>
<feature type="strand" evidence="16">
    <location>
        <begin position="602"/>
        <end position="604"/>
    </location>
</feature>
<feature type="strand" evidence="16">
    <location>
        <begin position="606"/>
        <end position="612"/>
    </location>
</feature>
<feature type="strand" evidence="16">
    <location>
        <begin position="615"/>
        <end position="620"/>
    </location>
</feature>
<feature type="helix" evidence="16">
    <location>
        <begin position="621"/>
        <end position="623"/>
    </location>
</feature>
<feature type="strand" evidence="16">
    <location>
        <begin position="624"/>
        <end position="626"/>
    </location>
</feature>
<name>FCSD2_HUMAN</name>
<sequence>MQPPPRKVKVTQELKNIQVEQMTKLQAKHQAECDLLEDMRTFSQKKAAIEREYAQGMQKLASQYLKRDWPGVKADDRNDYRSMYPVWKSFLEGTMQVAQSRMNICENYKNFISEPARTVRSLKEQQLKRCVDQLTKIQTELQETVKDLAKGKKKYFETEQMAHAVREKADIEAKSKLSLFQSRISLQKASVKLKARRSECNSKATHARNDYLLTLAAANAHQDRYYQTDLVNIMKALDGNVYDHLKDYLIAFSRTELETCQAVQNTFQFLLENSSKVVRDYNLQLFLQENAVFHKPQPFQFQPCDSDTSRQLESETGTTEEHSLNKEARKWATRVAREHKNIVHQQRVLNDLECHGAAVSEQSRAELEQKIDEARENIRKAEIIKLKAEARLDLLKQIGVSVDTWLKSAMNQVMEELENERWARPPAVTSNGTLHSLNADTEREEGEEFEDNMDVFDDSSSSPSGTLRNYPLTCKVVYSYKASQPDELTIEEHEVLEVIEDGDMEDWVKARNKVGQVGYVPEKYLQFPTSNSLLSMLQSLAALDSRSHTSSNSTEAELVSGSLNGDASVCFVKALYDYEGQTDDELSFPEGAIIRILNKENQDDDGFWEGEFNGRIGVFPSVLVEELSASENGDTPWMREIQISPSPKPHASLPPLPLYDQPPSSPYPSPDKRSSLYFPRSPSANEKSLHAESPGFSQASRHTPETSYGKLRPVRAAPPPPTQNHRRPAEKIEDVEITLV</sequence>
<reference key="1">
    <citation type="journal article" date="2003" name="Oncogene">
        <title>Carom: a novel membrane-associated guanylate kinase-interacting protein with two SH3 domains.</title>
        <authorList>
            <person name="Ohno H."/>
            <person name="Hirabayashi S."/>
            <person name="Kansaku A."/>
            <person name="Yao I."/>
            <person name="Tajima M."/>
            <person name="Nishimura W."/>
            <person name="Ohnishi H."/>
            <person name="Mashima H."/>
            <person name="Fujita T."/>
            <person name="Omata M."/>
            <person name="Hata Y."/>
        </authorList>
    </citation>
    <scope>NUCLEOTIDE SEQUENCE [MRNA] (ISOFORM 2)</scope>
    <scope>TISSUE SPECIFICITY</scope>
    <scope>INTERACTION WITH CASK AND MAGI1</scope>
    <source>
        <tissue>Lung</tissue>
    </source>
</reference>
<reference key="2">
    <citation type="journal article" date="1998" name="DNA Res.">
        <title>Prediction of the coding sequences of unidentified human genes. XI. The complete sequences of 100 new cDNA clones from brain which code for large proteins in vitro.</title>
        <authorList>
            <person name="Nagase T."/>
            <person name="Ishikawa K."/>
            <person name="Suyama M."/>
            <person name="Kikuno R."/>
            <person name="Miyajima N."/>
            <person name="Tanaka A."/>
            <person name="Kotani H."/>
            <person name="Nomura N."/>
            <person name="Ohara O."/>
        </authorList>
    </citation>
    <scope>NUCLEOTIDE SEQUENCE [LARGE SCALE MRNA] (ISOFORM 2)</scope>
    <source>
        <tissue>Brain</tissue>
    </source>
</reference>
<reference key="3">
    <citation type="submission" date="2004-01" db="EMBL/GenBank/DDBJ databases">
        <authorList>
            <person name="Okazaki N."/>
            <person name="Kikuno R.F."/>
            <person name="Nagase T."/>
            <person name="Ohara O."/>
            <person name="Koga H."/>
        </authorList>
    </citation>
    <scope>SEQUENCE REVISION</scope>
</reference>
<reference key="4">
    <citation type="journal article" date="2004" name="Nat. Genet.">
        <title>Complete sequencing and characterization of 21,243 full-length human cDNAs.</title>
        <authorList>
            <person name="Ota T."/>
            <person name="Suzuki Y."/>
            <person name="Nishikawa T."/>
            <person name="Otsuki T."/>
            <person name="Sugiyama T."/>
            <person name="Irie R."/>
            <person name="Wakamatsu A."/>
            <person name="Hayashi K."/>
            <person name="Sato H."/>
            <person name="Nagai K."/>
            <person name="Kimura K."/>
            <person name="Makita H."/>
            <person name="Sekine M."/>
            <person name="Obayashi M."/>
            <person name="Nishi T."/>
            <person name="Shibahara T."/>
            <person name="Tanaka T."/>
            <person name="Ishii S."/>
            <person name="Yamamoto J."/>
            <person name="Saito K."/>
            <person name="Kawai Y."/>
            <person name="Isono Y."/>
            <person name="Nakamura Y."/>
            <person name="Nagahari K."/>
            <person name="Murakami K."/>
            <person name="Yasuda T."/>
            <person name="Iwayanagi T."/>
            <person name="Wagatsuma M."/>
            <person name="Shiratori A."/>
            <person name="Sudo H."/>
            <person name="Hosoiri T."/>
            <person name="Kaku Y."/>
            <person name="Kodaira H."/>
            <person name="Kondo H."/>
            <person name="Sugawara M."/>
            <person name="Takahashi M."/>
            <person name="Kanda K."/>
            <person name="Yokoi T."/>
            <person name="Furuya T."/>
            <person name="Kikkawa E."/>
            <person name="Omura Y."/>
            <person name="Abe K."/>
            <person name="Kamihara K."/>
            <person name="Katsuta N."/>
            <person name="Sato K."/>
            <person name="Tanikawa M."/>
            <person name="Yamazaki M."/>
            <person name="Ninomiya K."/>
            <person name="Ishibashi T."/>
            <person name="Yamashita H."/>
            <person name="Murakawa K."/>
            <person name="Fujimori K."/>
            <person name="Tanai H."/>
            <person name="Kimata M."/>
            <person name="Watanabe M."/>
            <person name="Hiraoka S."/>
            <person name="Chiba Y."/>
            <person name="Ishida S."/>
            <person name="Ono Y."/>
            <person name="Takiguchi S."/>
            <person name="Watanabe S."/>
            <person name="Yosida M."/>
            <person name="Hotuta T."/>
            <person name="Kusano J."/>
            <person name="Kanehori K."/>
            <person name="Takahashi-Fujii A."/>
            <person name="Hara H."/>
            <person name="Tanase T.-O."/>
            <person name="Nomura Y."/>
            <person name="Togiya S."/>
            <person name="Komai F."/>
            <person name="Hara R."/>
            <person name="Takeuchi K."/>
            <person name="Arita M."/>
            <person name="Imose N."/>
            <person name="Musashino K."/>
            <person name="Yuuki H."/>
            <person name="Oshima A."/>
            <person name="Sasaki N."/>
            <person name="Aotsuka S."/>
            <person name="Yoshikawa Y."/>
            <person name="Matsunawa H."/>
            <person name="Ichihara T."/>
            <person name="Shiohata N."/>
            <person name="Sano S."/>
            <person name="Moriya S."/>
            <person name="Momiyama H."/>
            <person name="Satoh N."/>
            <person name="Takami S."/>
            <person name="Terashima Y."/>
            <person name="Suzuki O."/>
            <person name="Nakagawa S."/>
            <person name="Senoh A."/>
            <person name="Mizoguchi H."/>
            <person name="Goto Y."/>
            <person name="Shimizu F."/>
            <person name="Wakebe H."/>
            <person name="Hishigaki H."/>
            <person name="Watanabe T."/>
            <person name="Sugiyama A."/>
            <person name="Takemoto M."/>
            <person name="Kawakami B."/>
            <person name="Yamazaki M."/>
            <person name="Watanabe K."/>
            <person name="Kumagai A."/>
            <person name="Itakura S."/>
            <person name="Fukuzumi Y."/>
            <person name="Fujimori Y."/>
            <person name="Komiyama M."/>
            <person name="Tashiro H."/>
            <person name="Tanigami A."/>
            <person name="Fujiwara T."/>
            <person name="Ono T."/>
            <person name="Yamada K."/>
            <person name="Fujii Y."/>
            <person name="Ozaki K."/>
            <person name="Hirao M."/>
            <person name="Ohmori Y."/>
            <person name="Kawabata A."/>
            <person name="Hikiji T."/>
            <person name="Kobatake N."/>
            <person name="Inagaki H."/>
            <person name="Ikema Y."/>
            <person name="Okamoto S."/>
            <person name="Okitani R."/>
            <person name="Kawakami T."/>
            <person name="Noguchi S."/>
            <person name="Itoh T."/>
            <person name="Shigeta K."/>
            <person name="Senba T."/>
            <person name="Matsumura K."/>
            <person name="Nakajima Y."/>
            <person name="Mizuno T."/>
            <person name="Morinaga M."/>
            <person name="Sasaki M."/>
            <person name="Togashi T."/>
            <person name="Oyama M."/>
            <person name="Hata H."/>
            <person name="Watanabe M."/>
            <person name="Komatsu T."/>
            <person name="Mizushima-Sugano J."/>
            <person name="Satoh T."/>
            <person name="Shirai Y."/>
            <person name="Takahashi Y."/>
            <person name="Nakagawa K."/>
            <person name="Okumura K."/>
            <person name="Nagase T."/>
            <person name="Nomura N."/>
            <person name="Kikuchi H."/>
            <person name="Masuho Y."/>
            <person name="Yamashita R."/>
            <person name="Nakai K."/>
            <person name="Yada T."/>
            <person name="Nakamura Y."/>
            <person name="Ohara O."/>
            <person name="Isogai T."/>
            <person name="Sugano S."/>
        </authorList>
    </citation>
    <scope>NUCLEOTIDE SEQUENCE [LARGE SCALE MRNA] (ISOFORM 1)</scope>
</reference>
<reference key="5">
    <citation type="journal article" date="2006" name="Nature">
        <title>Human chromosome 11 DNA sequence and analysis including novel gene identification.</title>
        <authorList>
            <person name="Taylor T.D."/>
            <person name="Noguchi H."/>
            <person name="Totoki Y."/>
            <person name="Toyoda A."/>
            <person name="Kuroki Y."/>
            <person name="Dewar K."/>
            <person name="Lloyd C."/>
            <person name="Itoh T."/>
            <person name="Takeda T."/>
            <person name="Kim D.-W."/>
            <person name="She X."/>
            <person name="Barlow K.F."/>
            <person name="Bloom T."/>
            <person name="Bruford E."/>
            <person name="Chang J.L."/>
            <person name="Cuomo C.A."/>
            <person name="Eichler E."/>
            <person name="FitzGerald M.G."/>
            <person name="Jaffe D.B."/>
            <person name="LaButti K."/>
            <person name="Nicol R."/>
            <person name="Park H.-S."/>
            <person name="Seaman C."/>
            <person name="Sougnez C."/>
            <person name="Yang X."/>
            <person name="Zimmer A.R."/>
            <person name="Zody M.C."/>
            <person name="Birren B.W."/>
            <person name="Nusbaum C."/>
            <person name="Fujiyama A."/>
            <person name="Hattori M."/>
            <person name="Rogers J."/>
            <person name="Lander E.S."/>
            <person name="Sakaki Y."/>
        </authorList>
    </citation>
    <scope>NUCLEOTIDE SEQUENCE [LARGE SCALE GENOMIC DNA]</scope>
</reference>
<reference key="6">
    <citation type="journal article" date="2004" name="Genome Res.">
        <title>The status, quality, and expansion of the NIH full-length cDNA project: the Mammalian Gene Collection (MGC).</title>
        <authorList>
            <consortium name="The MGC Project Team"/>
        </authorList>
    </citation>
    <scope>NUCLEOTIDE SEQUENCE [LARGE SCALE MRNA] (ISOFORM 3)</scope>
    <source>
        <tissue>Bone marrow</tissue>
        <tissue>Kidney</tissue>
    </source>
</reference>
<reference key="7">
    <citation type="journal article" date="2007" name="BMC Genomics">
        <title>The full-ORF clone resource of the German cDNA consortium.</title>
        <authorList>
            <person name="Bechtel S."/>
            <person name="Rosenfelder H."/>
            <person name="Duda A."/>
            <person name="Schmidt C.P."/>
            <person name="Ernst U."/>
            <person name="Wellenreuther R."/>
            <person name="Mehrle A."/>
            <person name="Schuster C."/>
            <person name="Bahr A."/>
            <person name="Bloecker H."/>
            <person name="Heubner D."/>
            <person name="Hoerlein A."/>
            <person name="Michel G."/>
            <person name="Wedler H."/>
            <person name="Koehrer K."/>
            <person name="Ottenwaelder B."/>
            <person name="Poustka A."/>
            <person name="Wiemann S."/>
            <person name="Schupp I."/>
        </authorList>
    </citation>
    <scope>NUCLEOTIDE SEQUENCE [LARGE SCALE MRNA] OF 138-740</scope>
    <source>
        <tissue>Testis</tissue>
    </source>
</reference>
<reference key="8">
    <citation type="journal article" date="2004" name="Int. J. Mol. Med.">
        <title>Identification and characterization of human FCHSD1 and FCHSD2 genes in silico.</title>
        <authorList>
            <person name="Katoh M."/>
            <person name="Katoh M."/>
        </authorList>
    </citation>
    <scope>IDENTIFICATION</scope>
</reference>
<reference key="9">
    <citation type="journal article" date="2013" name="J. Proteome Res.">
        <title>Toward a comprehensive characterization of a human cancer cell phosphoproteome.</title>
        <authorList>
            <person name="Zhou H."/>
            <person name="Di Palma S."/>
            <person name="Preisinger C."/>
            <person name="Peng M."/>
            <person name="Polat A.N."/>
            <person name="Heck A.J."/>
            <person name="Mohammed S."/>
        </authorList>
    </citation>
    <scope>PHOSPHORYLATION [LARGE SCALE ANALYSIS] AT SER-675 AND SER-681</scope>
    <scope>IDENTIFICATION BY MASS SPECTROMETRY [LARGE SCALE ANALYSIS]</scope>
    <source>
        <tissue>Cervix carcinoma</tissue>
        <tissue>Erythroleukemia</tissue>
    </source>
</reference>
<reference key="10">
    <citation type="journal article" date="2015" name="Proteomics">
        <title>N-terminome analysis of the human mitochondrial proteome.</title>
        <authorList>
            <person name="Vaca Jacome A.S."/>
            <person name="Rabilloud T."/>
            <person name="Schaeffer-Reiss C."/>
            <person name="Rompais M."/>
            <person name="Ayoub D."/>
            <person name="Lane L."/>
            <person name="Bairoch A."/>
            <person name="Van Dorsselaer A."/>
            <person name="Carapito C."/>
        </authorList>
    </citation>
    <scope>IDENTIFICATION BY MASS SPECTROMETRY [LARGE SCALE ANALYSIS]</scope>
</reference>
<reference key="11">
    <citation type="journal article" date="2018" name="Proc. Natl. Acad. Sci. U.S.A.">
        <title>Role for ERK1/2-dependent activation of FCHSD2 in cancer cell-selective regulation of clathrin-mediated endocytosis.</title>
        <authorList>
            <person name="Xiao G.Y."/>
            <person name="Mohanakrishnan A."/>
            <person name="Schmid S.L."/>
        </authorList>
    </citation>
    <scope>FUNCTION</scope>
    <scope>SUBCELLULAR LOCATION</scope>
    <scope>PHOSPHORYLATION AT SER-681</scope>
    <scope>IDENTIFICATION BY MASS SPECTROMETRY</scope>
    <scope>MUTAGENESIS OF SER-681</scope>
</reference>
<reference key="12">
    <citation type="submission" date="2006-10" db="PDB data bank">
        <title>Solution structure of the second SH3 domain of human KIAA0769 protein.</title>
        <authorList>
            <consortium name="RIKEN structural genomics initiative (RSGI)"/>
        </authorList>
    </citation>
    <scope>STRUCTURE BY NMR OF 464-530 AND 569-628</scope>
</reference>
<reference evidence="13" key="13">
    <citation type="journal article" date="2018" name="Cell">
        <title>A Flat BAR Protein Promotes Actin Polymerization at the Base of Clathrin-Coated Pits.</title>
        <authorList>
            <person name="Almeida-Souza L."/>
            <person name="Frank R.A.W."/>
            <person name="Garcia-Nafria J."/>
            <person name="Colussi A."/>
            <person name="Gunawardana N."/>
            <person name="Johnson C.M."/>
            <person name="Yu M."/>
            <person name="Howard G."/>
            <person name="Andrews B."/>
            <person name="Vallis Y."/>
            <person name="McMahon H.T."/>
        </authorList>
    </citation>
    <scope>X-RAY CRYSTALLOGRAPHY (3.44 ANGSTROMS) OF 567-629 IN COMPLEX WITH ITSN1</scope>
    <scope>SUBUNIT</scope>
    <scope>INTERACTION WITH WASL AND ITSN1</scope>
    <scope>FUNCTION</scope>
    <scope>SUBCELLULAR LOCATION</scope>
    <scope>LIPID-BINDING</scope>
    <scope>DOMAIN</scope>
    <scope>MUTAGENESIS OF TYR-478; TYR-480; PRO-521; TYR-524; TYR-576; PHE-607 AND 622-VAL-LEU-623</scope>
</reference>
<accession>O94868</accession>
<accession>B4DNI3</accession>
<accession>Q7L8J9</accession>
<accession>Q8WVM2</accession>
<accession>Q96FV7</accession>
<accession>Q9UF77</accession>
<dbReference type="EMBL" id="AB018312">
    <property type="protein sequence ID" value="BAA34489.2"/>
    <property type="status" value="ALT_INIT"/>
    <property type="molecule type" value="mRNA"/>
</dbReference>
<dbReference type="EMBL" id="AP002381">
    <property type="status" value="NOT_ANNOTATED_CDS"/>
    <property type="molecule type" value="Genomic_DNA"/>
</dbReference>
<dbReference type="EMBL" id="AP002455">
    <property type="status" value="NOT_ANNOTATED_CDS"/>
    <property type="molecule type" value="Genomic_DNA"/>
</dbReference>
<dbReference type="EMBL" id="AK297928">
    <property type="protein sequence ID" value="BAG60245.1"/>
    <property type="molecule type" value="mRNA"/>
</dbReference>
<dbReference type="EMBL" id="AP004241">
    <property type="status" value="NOT_ANNOTATED_CDS"/>
    <property type="molecule type" value="Genomic_DNA"/>
</dbReference>
<dbReference type="EMBL" id="BC010394">
    <property type="protein sequence ID" value="AAH10394.1"/>
    <property type="molecule type" value="mRNA"/>
</dbReference>
<dbReference type="EMBL" id="BC017751">
    <property type="protein sequence ID" value="AAH17751.1"/>
    <property type="molecule type" value="mRNA"/>
</dbReference>
<dbReference type="EMBL" id="AL133567">
    <property type="protein sequence ID" value="CAB63720.1"/>
    <property type="molecule type" value="mRNA"/>
</dbReference>
<dbReference type="CCDS" id="CCDS8218.2">
    <molecule id="O94868-1"/>
</dbReference>
<dbReference type="PIR" id="T43489">
    <property type="entry name" value="T43489"/>
</dbReference>
<dbReference type="RefSeq" id="NP_055639.2">
    <molecule id="O94868-1"/>
    <property type="nucleotide sequence ID" value="NM_014824.3"/>
</dbReference>
<dbReference type="RefSeq" id="XP_047283905.1">
    <molecule id="O94868-2"/>
    <property type="nucleotide sequence ID" value="XM_047427949.1"/>
</dbReference>
<dbReference type="PDB" id="2DL5">
    <property type="method" value="NMR"/>
    <property type="chains" value="A=466-530"/>
</dbReference>
<dbReference type="PDB" id="2DL7">
    <property type="method" value="NMR"/>
    <property type="chains" value="A=569-628"/>
</dbReference>
<dbReference type="PDB" id="6GBU">
    <property type="method" value="X-ray"/>
    <property type="resolution" value="3.44 A"/>
    <property type="chains" value="A/C/E/G=567-629"/>
</dbReference>
<dbReference type="PDBsum" id="2DL5"/>
<dbReference type="PDBsum" id="2DL7"/>
<dbReference type="PDBsum" id="6GBU"/>
<dbReference type="EMDB" id="EMD-4371"/>
<dbReference type="SMR" id="O94868"/>
<dbReference type="BioGRID" id="115205">
    <property type="interactions" value="66"/>
</dbReference>
<dbReference type="CORUM" id="O94868"/>
<dbReference type="FunCoup" id="O94868">
    <property type="interactions" value="1344"/>
</dbReference>
<dbReference type="IntAct" id="O94868">
    <property type="interactions" value="63"/>
</dbReference>
<dbReference type="MINT" id="O94868"/>
<dbReference type="STRING" id="9606.ENSP00000386722"/>
<dbReference type="GlyGen" id="O94868">
    <property type="glycosylation" value="1 site, 1 O-linked glycan (1 site)"/>
</dbReference>
<dbReference type="iPTMnet" id="O94868"/>
<dbReference type="PhosphoSitePlus" id="O94868"/>
<dbReference type="BioMuta" id="FCHSD2"/>
<dbReference type="jPOST" id="O94868"/>
<dbReference type="MassIVE" id="O94868"/>
<dbReference type="PaxDb" id="9606-ENSP00000386722"/>
<dbReference type="PeptideAtlas" id="O94868"/>
<dbReference type="ProteomicsDB" id="50505">
    <molecule id="O94868-1"/>
</dbReference>
<dbReference type="ProteomicsDB" id="50506">
    <molecule id="O94868-2"/>
</dbReference>
<dbReference type="ProteomicsDB" id="50507">
    <molecule id="O94868-3"/>
</dbReference>
<dbReference type="Pumba" id="O94868"/>
<dbReference type="Antibodypedia" id="49955">
    <property type="antibodies" value="95 antibodies from 19 providers"/>
</dbReference>
<dbReference type="DNASU" id="9873"/>
<dbReference type="Ensembl" id="ENST00000311172.11">
    <molecule id="O94868-2"/>
    <property type="protein sequence ID" value="ENSP00000308978.7"/>
    <property type="gene ID" value="ENSG00000137478.15"/>
</dbReference>
<dbReference type="Ensembl" id="ENST00000409418.9">
    <molecule id="O94868-1"/>
    <property type="protein sequence ID" value="ENSP00000386722.4"/>
    <property type="gene ID" value="ENSG00000137478.15"/>
</dbReference>
<dbReference type="Ensembl" id="ENST00000409853.5">
    <molecule id="O94868-3"/>
    <property type="protein sequence ID" value="ENSP00000386314.1"/>
    <property type="gene ID" value="ENSG00000137478.15"/>
</dbReference>
<dbReference type="GeneID" id="9873"/>
<dbReference type="KEGG" id="hsa:9873"/>
<dbReference type="MANE-Select" id="ENST00000409418.9">
    <property type="protein sequence ID" value="ENSP00000386722.4"/>
    <property type="RefSeq nucleotide sequence ID" value="NM_014824.3"/>
    <property type="RefSeq protein sequence ID" value="NP_055639.2"/>
</dbReference>
<dbReference type="UCSC" id="uc001oth.5">
    <molecule id="O94868-1"/>
    <property type="organism name" value="human"/>
</dbReference>
<dbReference type="AGR" id="HGNC:29114"/>
<dbReference type="CTD" id="9873"/>
<dbReference type="DisGeNET" id="9873"/>
<dbReference type="GeneCards" id="FCHSD2"/>
<dbReference type="HGNC" id="HGNC:29114">
    <property type="gene designation" value="FCHSD2"/>
</dbReference>
<dbReference type="HPA" id="ENSG00000137478">
    <property type="expression patterns" value="Low tissue specificity"/>
</dbReference>
<dbReference type="MIM" id="617556">
    <property type="type" value="gene"/>
</dbReference>
<dbReference type="neXtProt" id="NX_O94868"/>
<dbReference type="OpenTargets" id="ENSG00000137478"/>
<dbReference type="PharmGKB" id="PA128394562"/>
<dbReference type="VEuPathDB" id="HostDB:ENSG00000137478"/>
<dbReference type="eggNOG" id="KOG3565">
    <property type="taxonomic scope" value="Eukaryota"/>
</dbReference>
<dbReference type="GeneTree" id="ENSGT00510000046732"/>
<dbReference type="HOGENOM" id="CLU_013546_2_0_1"/>
<dbReference type="InParanoid" id="O94868"/>
<dbReference type="OrthoDB" id="10065861at2759"/>
<dbReference type="PAN-GO" id="O94868">
    <property type="GO annotations" value="4 GO annotations based on evolutionary models"/>
</dbReference>
<dbReference type="PhylomeDB" id="O94868"/>
<dbReference type="TreeFam" id="TF324557"/>
<dbReference type="PathwayCommons" id="O94868"/>
<dbReference type="SignaLink" id="O94868"/>
<dbReference type="BioGRID-ORCS" id="9873">
    <property type="hits" value="15 hits in 1160 CRISPR screens"/>
</dbReference>
<dbReference type="ChiTaRS" id="FCHSD2">
    <property type="organism name" value="human"/>
</dbReference>
<dbReference type="EvolutionaryTrace" id="O94868"/>
<dbReference type="GeneWiki" id="FCHSD2"/>
<dbReference type="GenomeRNAi" id="9873"/>
<dbReference type="Pharos" id="O94868">
    <property type="development level" value="Tbio"/>
</dbReference>
<dbReference type="PRO" id="PR:O94868"/>
<dbReference type="Proteomes" id="UP000005640">
    <property type="component" value="Chromosome 11"/>
</dbReference>
<dbReference type="RNAct" id="O94868">
    <property type="molecule type" value="protein"/>
</dbReference>
<dbReference type="Bgee" id="ENSG00000137478">
    <property type="expression patterns" value="Expressed in cortical plate and 193 other cell types or tissues"/>
</dbReference>
<dbReference type="ExpressionAtlas" id="O94868">
    <property type="expression patterns" value="baseline and differential"/>
</dbReference>
<dbReference type="GO" id="GO:0070161">
    <property type="term" value="C:anchoring junction"/>
    <property type="evidence" value="ECO:0007669"/>
    <property type="project" value="UniProtKB-SubCell"/>
</dbReference>
<dbReference type="GO" id="GO:0005905">
    <property type="term" value="C:clathrin-coated pit"/>
    <property type="evidence" value="ECO:0007669"/>
    <property type="project" value="UniProtKB-SubCell"/>
</dbReference>
<dbReference type="GO" id="GO:0031594">
    <property type="term" value="C:neuromuscular junction"/>
    <property type="evidence" value="ECO:0000318"/>
    <property type="project" value="GO_Central"/>
</dbReference>
<dbReference type="GO" id="GO:0005886">
    <property type="term" value="C:plasma membrane"/>
    <property type="evidence" value="ECO:0000314"/>
    <property type="project" value="UniProtKB"/>
</dbReference>
<dbReference type="GO" id="GO:0055037">
    <property type="term" value="C:recycling endosome"/>
    <property type="evidence" value="ECO:0000318"/>
    <property type="project" value="GO_Central"/>
</dbReference>
<dbReference type="GO" id="GO:0120043">
    <property type="term" value="C:stereocilium shaft"/>
    <property type="evidence" value="ECO:0000250"/>
    <property type="project" value="UniProtKB"/>
</dbReference>
<dbReference type="GO" id="GO:0005547">
    <property type="term" value="F:phosphatidylinositol-3,4,5-trisphosphate binding"/>
    <property type="evidence" value="ECO:0000314"/>
    <property type="project" value="UniProtKB"/>
</dbReference>
<dbReference type="GO" id="GO:0043325">
    <property type="term" value="F:phosphatidylinositol-3,4-bisphosphate binding"/>
    <property type="evidence" value="ECO:0000314"/>
    <property type="project" value="UniProtKB"/>
</dbReference>
<dbReference type="GO" id="GO:0072583">
    <property type="term" value="P:clathrin-dependent endocytosis"/>
    <property type="evidence" value="ECO:0000315"/>
    <property type="project" value="UniProtKB"/>
</dbReference>
<dbReference type="GO" id="GO:0061024">
    <property type="term" value="P:membrane organization"/>
    <property type="evidence" value="ECO:0007669"/>
    <property type="project" value="Ensembl"/>
</dbReference>
<dbReference type="GO" id="GO:0007274">
    <property type="term" value="P:neuromuscular synaptic transmission"/>
    <property type="evidence" value="ECO:0000318"/>
    <property type="project" value="GO_Central"/>
</dbReference>
<dbReference type="GO" id="GO:0030838">
    <property type="term" value="P:positive regulation of actin filament polymerization"/>
    <property type="evidence" value="ECO:0000250"/>
    <property type="project" value="UniProtKB"/>
</dbReference>
<dbReference type="GO" id="GO:2000601">
    <property type="term" value="P:positive regulation of Arp2/3 complex-mediated actin nucleation"/>
    <property type="evidence" value="ECO:0000315"/>
    <property type="project" value="UniProtKB"/>
</dbReference>
<dbReference type="GO" id="GO:0015031">
    <property type="term" value="P:protein transport"/>
    <property type="evidence" value="ECO:0007669"/>
    <property type="project" value="UniProtKB-KW"/>
</dbReference>
<dbReference type="GO" id="GO:0030833">
    <property type="term" value="P:regulation of actin filament polymerization"/>
    <property type="evidence" value="ECO:0000318"/>
    <property type="project" value="GO_Central"/>
</dbReference>
<dbReference type="CDD" id="cd07677">
    <property type="entry name" value="F-BAR_FCHSD2"/>
    <property type="match status" value="1"/>
</dbReference>
<dbReference type="CDD" id="cd11894">
    <property type="entry name" value="SH3_FCHSD2_2"/>
    <property type="match status" value="1"/>
</dbReference>
<dbReference type="CDD" id="cd11761">
    <property type="entry name" value="SH3_FCHSD_1"/>
    <property type="match status" value="1"/>
</dbReference>
<dbReference type="FunFam" id="1.20.1270.60:FF:000026">
    <property type="entry name" value="FCH and double SH3 domains protein 2"/>
    <property type="match status" value="1"/>
</dbReference>
<dbReference type="FunFam" id="2.30.30.40:FF:000033">
    <property type="entry name" value="FCH and double SH3 domains protein 2"/>
    <property type="match status" value="1"/>
</dbReference>
<dbReference type="FunFam" id="2.30.30.40:FF:000060">
    <property type="entry name" value="FCH and double SH3 domains protein 2"/>
    <property type="match status" value="1"/>
</dbReference>
<dbReference type="Gene3D" id="1.20.1270.60">
    <property type="entry name" value="Arfaptin homology (AH) domain/BAR domain"/>
    <property type="match status" value="1"/>
</dbReference>
<dbReference type="Gene3D" id="2.30.30.40">
    <property type="entry name" value="SH3 Domains"/>
    <property type="match status" value="2"/>
</dbReference>
<dbReference type="InterPro" id="IPR027267">
    <property type="entry name" value="AH/BAR_dom_sf"/>
</dbReference>
<dbReference type="InterPro" id="IPR031160">
    <property type="entry name" value="F_BAR"/>
</dbReference>
<dbReference type="InterPro" id="IPR001060">
    <property type="entry name" value="FCH_dom"/>
</dbReference>
<dbReference type="InterPro" id="IPR034934">
    <property type="entry name" value="FCHSD2_F-BAR_dom"/>
</dbReference>
<dbReference type="InterPro" id="IPR035556">
    <property type="entry name" value="FCHSD2_SH3_2"/>
</dbReference>
<dbReference type="InterPro" id="IPR035460">
    <property type="entry name" value="FCHSD_SH3_1"/>
</dbReference>
<dbReference type="InterPro" id="IPR036028">
    <property type="entry name" value="SH3-like_dom_sf"/>
</dbReference>
<dbReference type="InterPro" id="IPR001452">
    <property type="entry name" value="SH3_domain"/>
</dbReference>
<dbReference type="PANTHER" id="PTHR15735:SF11">
    <property type="entry name" value="F-BAR AND DOUBLE SH3 DOMAINS PROTEIN 2"/>
    <property type="match status" value="1"/>
</dbReference>
<dbReference type="PANTHER" id="PTHR15735">
    <property type="entry name" value="FCH AND DOUBLE SH3 DOMAINS PROTEIN"/>
    <property type="match status" value="1"/>
</dbReference>
<dbReference type="Pfam" id="PF00611">
    <property type="entry name" value="FCH"/>
    <property type="match status" value="1"/>
</dbReference>
<dbReference type="Pfam" id="PF00018">
    <property type="entry name" value="SH3_1"/>
    <property type="match status" value="1"/>
</dbReference>
<dbReference type="Pfam" id="PF14604">
    <property type="entry name" value="SH3_9"/>
    <property type="match status" value="1"/>
</dbReference>
<dbReference type="PRINTS" id="PR00452">
    <property type="entry name" value="SH3DOMAIN"/>
</dbReference>
<dbReference type="SMART" id="SM00055">
    <property type="entry name" value="FCH"/>
    <property type="match status" value="1"/>
</dbReference>
<dbReference type="SMART" id="SM00326">
    <property type="entry name" value="SH3"/>
    <property type="match status" value="2"/>
</dbReference>
<dbReference type="SUPFAM" id="SSF103657">
    <property type="entry name" value="BAR/IMD domain-like"/>
    <property type="match status" value="1"/>
</dbReference>
<dbReference type="SUPFAM" id="SSF50044">
    <property type="entry name" value="SH3-domain"/>
    <property type="match status" value="2"/>
</dbReference>
<dbReference type="PROSITE" id="PS51741">
    <property type="entry name" value="F_BAR"/>
    <property type="match status" value="1"/>
</dbReference>
<dbReference type="PROSITE" id="PS50002">
    <property type="entry name" value="SH3"/>
    <property type="match status" value="2"/>
</dbReference>
<gene>
    <name type="primary">FCHSD2</name>
    <name type="synonym">KIAA0769</name>
    <name type="synonym">SH3MD3</name>
</gene>
<proteinExistence type="evidence at protein level"/>
<organism>
    <name type="scientific">Homo sapiens</name>
    <name type="common">Human</name>
    <dbReference type="NCBI Taxonomy" id="9606"/>
    <lineage>
        <taxon>Eukaryota</taxon>
        <taxon>Metazoa</taxon>
        <taxon>Chordata</taxon>
        <taxon>Craniata</taxon>
        <taxon>Vertebrata</taxon>
        <taxon>Euteleostomi</taxon>
        <taxon>Mammalia</taxon>
        <taxon>Eutheria</taxon>
        <taxon>Euarchontoglires</taxon>
        <taxon>Primates</taxon>
        <taxon>Haplorrhini</taxon>
        <taxon>Catarrhini</taxon>
        <taxon>Hominidae</taxon>
        <taxon>Homo</taxon>
    </lineage>
</organism>
<comment type="function">
    <text evidence="7 8">Adapter protein that plays a role in endocytosis via clathrin-coated pits. Contributes to the internalization of cell surface receptors, such as integrin ITGB1 and transferrin receptor (PubMed:29887380). Promotes endocytosis of EGFR in cancer cells, and thereby contributes to the down-regulation of EGFR signaling (PubMed:30249660). Recruited to clathrin-coated pits during a mid-to-late stage of assembly, where it is required for normal progress from U-shaped intermediate stage pits to terminal, omega-shaped pits (PubMed:29887380). Binds to membranes enriched in phosphatidylinositol 3,4-bisphosphate or phosphatidylinositol 3,4,5-trisphosphate (PubMed:29887380). When bound to membranes, promotes actin polymerization via its interaction with WAS and/or WASL which leads to the activation of the Arp2/3 complex. Does not promote actin polymerisation in the absence of membranes (PubMed:29887380).</text>
</comment>
<comment type="subunit">
    <text evidence="1 6 7">Homodimer (PubMed:29887380). Interacts (via SH3 domain 2) with ITSN1 (via SH3 domain 4). Recruited to clathrin-coated pits during a mid-to-late stage of assembly via interaction with ITSN1. Interacts (via SH3 domain 1) with WASL (PubMed:29887380). Interacts with WAS (By similarity). Interacts with CASK and MAGI1. CASK inhibits interaction with MAGI1 (PubMed:14627983).</text>
</comment>
<comment type="interaction">
    <interactant intactId="EBI-1215612">
        <id>O94868</id>
    </interactant>
    <interactant intactId="EBI-717672">
        <id>Q9NUQ8</id>
        <label>ABCF3</label>
    </interactant>
    <organismsDiffer>false</organismsDiffer>
    <experiments>4</experiments>
</comment>
<comment type="interaction">
    <interactant intactId="EBI-1215612">
        <id>O94868</id>
    </interactant>
    <interactant intactId="EBI-10175124">
        <id>Q8IZU0</id>
        <label>FAM9B</label>
    </interactant>
    <organismsDiffer>false</organismsDiffer>
    <experiments>4</experiments>
</comment>
<comment type="interaction">
    <interactant intactId="EBI-1215612">
        <id>O94868</id>
    </interactant>
    <interactant intactId="EBI-2125614">
        <id>Q9BVG8</id>
        <label>KIFC3</label>
    </interactant>
    <organismsDiffer>false</organismsDiffer>
    <experiments>3</experiments>
</comment>
<comment type="interaction">
    <interactant intactId="EBI-1215612">
        <id>O94868</id>
    </interactant>
    <interactant intactId="EBI-924464">
        <id>Q96QZ7</id>
        <label>MAGI1</label>
    </interactant>
    <organismsDiffer>false</organismsDiffer>
    <experiments>5</experiments>
</comment>
<comment type="interaction">
    <interactant intactId="EBI-1215612">
        <id>O94868</id>
    </interactant>
    <interactant intactId="EBI-742948">
        <id>Q5JR59</id>
        <label>MTUS2</label>
    </interactant>
    <organismsDiffer>false</organismsDiffer>
    <experiments>4</experiments>
</comment>
<comment type="interaction">
    <interactant intactId="EBI-1215612">
        <id>O94868</id>
    </interactant>
    <interactant intactId="EBI-355164">
        <id>P55072</id>
        <label>VCP</label>
    </interactant>
    <organismsDiffer>false</organismsDiffer>
    <experiments>2</experiments>
</comment>
<comment type="interaction">
    <interactant intactId="EBI-1215612">
        <id>O94868</id>
    </interactant>
    <interactant intactId="EBI-704635">
        <id>Q62915</id>
        <label>Cask</label>
    </interactant>
    <organismsDiffer>true</organismsDiffer>
    <experiments>2</experiments>
</comment>
<comment type="interaction">
    <interactant intactId="EBI-11958845">
        <id>O94868-3</id>
    </interactant>
    <interactant intactId="EBI-751746">
        <id>Q15027</id>
        <label>ACAP1</label>
    </interactant>
    <organismsDiffer>false</organismsDiffer>
    <experiments>3</experiments>
</comment>
<comment type="interaction">
    <interactant intactId="EBI-11958845">
        <id>O94868-3</id>
    </interactant>
    <interactant intactId="EBI-11954519">
        <id>Q49AR9</id>
        <label>ANKS1A</label>
    </interactant>
    <organismsDiffer>false</organismsDiffer>
    <experiments>3</experiments>
</comment>
<comment type="interaction">
    <interactant intactId="EBI-11958845">
        <id>O94868-3</id>
    </interactant>
    <interactant intactId="EBI-1166928">
        <id>Q8N5M1</id>
        <label>ATPAF2</label>
    </interactant>
    <organismsDiffer>false</organismsDiffer>
    <experiments>3</experiments>
</comment>
<comment type="interaction">
    <interactant intactId="EBI-11958845">
        <id>O94868-3</id>
    </interactant>
    <interactant intactId="EBI-10193358">
        <id>Q96GS4</id>
        <label>BORCS6</label>
    </interactant>
    <organismsDiffer>false</organismsDiffer>
    <experiments>4</experiments>
</comment>
<comment type="interaction">
    <interactant intactId="EBI-11958845">
        <id>O94868-3</id>
    </interactant>
    <interactant intactId="EBI-744556">
        <id>Q96HB5</id>
        <label>CCDC120</label>
    </interactant>
    <organismsDiffer>false</organismsDiffer>
    <experiments>3</experiments>
</comment>
<comment type="interaction">
    <interactant intactId="EBI-11958845">
        <id>O94868-3</id>
    </interactant>
    <interactant intactId="EBI-17212717">
        <id>G5E9W6</id>
        <label>CCDC183</label>
    </interactant>
    <organismsDiffer>false</organismsDiffer>
    <experiments>3</experiments>
</comment>
<comment type="interaction">
    <interactant intactId="EBI-11958845">
        <id>O94868-3</id>
    </interactant>
    <interactant intactId="EBI-10175300">
        <id>Q8TD31-3</id>
        <label>CCHCR1</label>
    </interactant>
    <organismsDiffer>false</organismsDiffer>
    <experiments>5</experiments>
</comment>
<comment type="interaction">
    <interactant intactId="EBI-11958845">
        <id>O94868-3</id>
    </interactant>
    <interactant intactId="EBI-746238">
        <id>Q07002</id>
        <label>CDK18</label>
    </interactant>
    <organismsDiffer>false</organismsDiffer>
    <experiments>3</experiments>
</comment>
<comment type="interaction">
    <interactant intactId="EBI-11958845">
        <id>O94868-3</id>
    </interactant>
    <interactant intactId="EBI-1188472">
        <id>P78358</id>
        <label>CTAG1B</label>
    </interactant>
    <organismsDiffer>false</organismsDiffer>
    <experiments>3</experiments>
</comment>
<comment type="interaction">
    <interactant intactId="EBI-11958845">
        <id>O94868-3</id>
    </interactant>
    <interactant intactId="EBI-744099">
        <id>Q9H0I2</id>
        <label>ENKD1</label>
    </interactant>
    <organismsDiffer>false</organismsDiffer>
    <experiments>3</experiments>
</comment>
<comment type="interaction">
    <interactant intactId="EBI-11958845">
        <id>O94868-3</id>
    </interactant>
    <interactant intactId="EBI-348399">
        <id>P22607</id>
        <label>FGFR3</label>
    </interactant>
    <organismsDiffer>false</organismsDiffer>
    <experiments>3</experiments>
</comment>
<comment type="interaction">
    <interactant intactId="EBI-11958845">
        <id>O94868-3</id>
    </interactant>
    <interactant intactId="EBI-473189">
        <id>Q96D09</id>
        <label>GPRASP2</label>
    </interactant>
    <organismsDiffer>false</organismsDiffer>
    <experiments>3</experiments>
</comment>
<comment type="interaction">
    <interactant intactId="EBI-11958845">
        <id>O94868-3</id>
    </interactant>
    <interactant intactId="EBI-351506">
        <id>P06396</id>
        <label>GSN</label>
    </interactant>
    <organismsDiffer>false</organismsDiffer>
    <experiments>3</experiments>
</comment>
<comment type="interaction">
    <interactant intactId="EBI-11958845">
        <id>O94868-3</id>
    </interactant>
    <interactant intactId="EBI-11953488">
        <id>P56524-2</id>
        <label>HDAC4</label>
    </interactant>
    <organismsDiffer>false</organismsDiffer>
    <experiments>3</experiments>
</comment>
<comment type="interaction">
    <interactant intactId="EBI-11958845">
        <id>O94868-3</id>
    </interactant>
    <interactant intactId="EBI-740220">
        <id>O14964</id>
        <label>HGS</label>
    </interactant>
    <organismsDiffer>false</organismsDiffer>
    <experiments>3</experiments>
</comment>
<comment type="interaction">
    <interactant intactId="EBI-11958845">
        <id>O94868-3</id>
    </interactant>
    <interactant intactId="EBI-746815">
        <id>Q86YM7</id>
        <label>HOMER1</label>
    </interactant>
    <organismsDiffer>false</organismsDiffer>
    <experiments>3</experiments>
</comment>
<comment type="interaction">
    <interactant intactId="EBI-11958845">
        <id>O94868-3</id>
    </interactant>
    <interactant intactId="EBI-350145">
        <id>P01112</id>
        <label>HRAS</label>
    </interactant>
    <organismsDiffer>false</organismsDiffer>
    <experiments>3</experiments>
</comment>
<comment type="interaction">
    <interactant intactId="EBI-11958845">
        <id>O94868-3</id>
    </interactant>
    <interactant intactId="EBI-8473670">
        <id>O95447</id>
        <label>LCA5L</label>
    </interactant>
    <organismsDiffer>false</organismsDiffer>
    <experiments>3</experiments>
</comment>
<comment type="interaction">
    <interactant intactId="EBI-11958845">
        <id>O94868-3</id>
    </interactant>
    <interactant intactId="EBI-740738">
        <id>O95751</id>
        <label>LDOC1</label>
    </interactant>
    <organismsDiffer>false</organismsDiffer>
    <experiments>3</experiments>
</comment>
<comment type="interaction">
    <interactant intactId="EBI-11958845">
        <id>O94868-3</id>
    </interactant>
    <interactant intactId="EBI-1048159">
        <id>P55081</id>
        <label>MFAP1</label>
    </interactant>
    <organismsDiffer>false</organismsDiffer>
    <experiments>3</experiments>
</comment>
<comment type="interaction">
    <interactant intactId="EBI-11958845">
        <id>O94868-3</id>
    </interactant>
    <interactant intactId="EBI-743811">
        <id>Q8NEH6</id>
        <label>MNS1</label>
    </interactant>
    <organismsDiffer>false</organismsDiffer>
    <experiments>3</experiments>
</comment>
<comment type="interaction">
    <interactant intactId="EBI-11958845">
        <id>O94868-3</id>
    </interactant>
    <interactant intactId="EBI-995714">
        <id>Q9Y605</id>
        <label>MRFAP1</label>
    </interactant>
    <organismsDiffer>false</organismsDiffer>
    <experiments>3</experiments>
</comment>
<comment type="interaction">
    <interactant intactId="EBI-11958845">
        <id>O94868-3</id>
    </interactant>
    <interactant intactId="EBI-2805516">
        <id>P31321</id>
        <label>PRKAR1B</label>
    </interactant>
    <organismsDiffer>false</organismsDiffer>
    <experiments>3</experiments>
</comment>
<comment type="interaction">
    <interactant intactId="EBI-11958845">
        <id>O94868-3</id>
    </interactant>
    <interactant intactId="EBI-726876">
        <id>Q6NUQ1</id>
        <label>RINT1</label>
    </interactant>
    <organismsDiffer>false</organismsDiffer>
    <experiments>3</experiments>
</comment>
<comment type="interaction">
    <interactant intactId="EBI-11958845">
        <id>O94868-3</id>
    </interactant>
    <interactant intactId="EBI-1570153">
        <id>Q6UVJ0</id>
        <label>SASS6</label>
    </interactant>
    <organismsDiffer>false</organismsDiffer>
    <experiments>3</experiments>
</comment>
<comment type="interaction">
    <interactant intactId="EBI-11958845">
        <id>O94868-3</id>
    </interactant>
    <interactant intactId="EBI-748621">
        <id>Q9UJW9</id>
        <label>SERTAD3</label>
    </interactant>
    <organismsDiffer>false</organismsDiffer>
    <experiments>3</experiments>
</comment>
<comment type="interaction">
    <interactant intactId="EBI-11958845">
        <id>O94868-3</id>
    </interactant>
    <interactant intactId="EBI-747035">
        <id>Q9H788</id>
        <label>SH2D4A</label>
    </interactant>
    <organismsDiffer>false</organismsDiffer>
    <experiments>5</experiments>
</comment>
<comment type="interaction">
    <interactant intactId="EBI-11958845">
        <id>O94868-3</id>
    </interactant>
    <interactant intactId="EBI-11741437">
        <id>Q08117-2</id>
        <label>TLE5</label>
    </interactant>
    <organismsDiffer>false</organismsDiffer>
    <experiments>3</experiments>
</comment>
<comment type="interaction">
    <interactant intactId="EBI-11958845">
        <id>O94868-3</id>
    </interactant>
    <interactant intactId="EBI-10241197">
        <id>Q3SY00</id>
        <label>TSGA10IP</label>
    </interactant>
    <organismsDiffer>false</organismsDiffer>
    <experiments>3</experiments>
</comment>
<comment type="interaction">
    <interactant intactId="EBI-11958845">
        <id>O94868-3</id>
    </interactant>
    <interactant intactId="EBI-739895">
        <id>Q8N6Y0</id>
        <label>USHBP1</label>
    </interactant>
    <organismsDiffer>false</organismsDiffer>
    <experiments>3</experiments>
</comment>
<comment type="interaction">
    <interactant intactId="EBI-11958845">
        <id>O94868-3</id>
    </interactant>
    <interactant intactId="EBI-2559305">
        <id>A5D8V6</id>
        <label>VPS37C</label>
    </interactant>
    <organismsDiffer>false</organismsDiffer>
    <experiments>3</experiments>
</comment>
<comment type="interaction">
    <interactant intactId="EBI-11958845">
        <id>O94868-3</id>
    </interactant>
    <interactant intactId="EBI-6427977">
        <id>Q96SQ5</id>
        <label>ZNF587</label>
    </interactant>
    <organismsDiffer>false</organismsDiffer>
    <experiments>3</experiments>
</comment>
<comment type="subcellular location">
    <subcellularLocation>
        <location evidence="1">Cytoplasm</location>
    </subcellularLocation>
    <subcellularLocation>
        <location evidence="6">Cell junction</location>
    </subcellularLocation>
    <subcellularLocation>
        <location evidence="7 8">Membrane</location>
        <location evidence="7 8">Clathrin-coated pit</location>
    </subcellularLocation>
    <subcellularLocation>
        <location evidence="6 7 8">Cell membrane</location>
        <topology evidence="6 8">Peripheral membrane protein</topology>
        <orientation evidence="6 8">Cytoplasmic side</orientation>
    </subcellularLocation>
    <subcellularLocation>
        <location evidence="1">Cell projection</location>
        <location evidence="1">Stereocilium</location>
    </subcellularLocation>
    <text evidence="6 7 8">Partially localized at clathrin-coated pits at the cell membrane (PubMed:30249660). Detected at the cell membrane at sites around clathrin-coated pits, very close to the clathrin-coated pits but not an intrinsic part of the clathrin-coated pits (PubMed:29887380). Colocalizes at cell-cell contacts with CDH1, but is not detected at tight junctions (PubMed:14627983).</text>
</comment>
<comment type="alternative products">
    <event type="alternative splicing"/>
    <isoform>
        <id>O94868-1</id>
        <name>1</name>
        <sequence type="displayed"/>
    </isoform>
    <isoform>
        <id>O94868-2</id>
        <name>2</name>
        <sequence type="described" ref="VSP_023167"/>
    </isoform>
    <isoform>
        <id>O94868-3</id>
        <name>3</name>
        <sequence type="described" ref="VSP_023167 VSP_023168 VSP_023169"/>
    </isoform>
</comment>
<comment type="tissue specificity">
    <text evidence="6">Liver, brain, heart, placenta, skeletal muscle, pancreas, lung and kidney.</text>
</comment>
<comment type="domain">
    <text evidence="7">The F-BAR domain has an atypical, flat shape and binds preferentially to flat membranes. Upon heterologous expression, the isolated F-BAR domain is localized at the cell membrane, and causes the formation of cellular protrusions.</text>
</comment>
<comment type="domain">
    <text evidence="7">Recruited to clathrin-coated pits via SH3 domain 2.</text>
</comment>
<comment type="domain">
    <text evidence="7">The two SH3 domains cooperate to maintain the protein in an autoinhibited conformation that prevents promiscuous membrane binding.</text>
</comment>
<comment type="PTM">
    <text evidence="8">Phosphorylated. Phosphorylation on a Ser residue is important for recruitment to the cell membrane and for its role in promoting endocytosis.</text>
</comment>
<comment type="caution">
    <text evidence="7 8 12">The function in endocytosis may depend on the cell type. Plays a role in EGFR endocytosis via clathrin-coated pits in cancer cells, but apparently not in normal cells (PubMed:30249660). A later study used both HeLa cells and BSC1 cells (a C.aethiops kidney cell line), and did not mention any cell-type specific effects (PubMed:29887380).</text>
</comment>
<comment type="sequence caution" evidence="12">
    <conflict type="erroneous initiation">
        <sequence resource="EMBL-CDS" id="BAA34489"/>
    </conflict>
</comment>
<keyword id="KW-0002">3D-structure</keyword>
<keyword id="KW-0025">Alternative splicing</keyword>
<keyword id="KW-0965">Cell junction</keyword>
<keyword id="KW-1003">Cell membrane</keyword>
<keyword id="KW-0966">Cell projection</keyword>
<keyword id="KW-0168">Coated pit</keyword>
<keyword id="KW-0175">Coiled coil</keyword>
<keyword id="KW-0963">Cytoplasm</keyword>
<keyword id="KW-0254">Endocytosis</keyword>
<keyword id="KW-0446">Lipid-binding</keyword>
<keyword id="KW-0472">Membrane</keyword>
<keyword id="KW-0597">Phosphoprotein</keyword>
<keyword id="KW-0653">Protein transport</keyword>
<keyword id="KW-1267">Proteomics identification</keyword>
<keyword id="KW-1185">Reference proteome</keyword>
<keyword id="KW-0677">Repeat</keyword>
<keyword id="KW-0728">SH3 domain</keyword>
<keyword id="KW-0813">Transport</keyword>